<comment type="catalytic activity">
    <reaction evidence="1">
        <text>D-arabinose 5-phosphate + phosphoenolpyruvate + H2O = 3-deoxy-alpha-D-manno-2-octulosonate-8-phosphate + phosphate</text>
        <dbReference type="Rhea" id="RHEA:14053"/>
        <dbReference type="ChEBI" id="CHEBI:15377"/>
        <dbReference type="ChEBI" id="CHEBI:43474"/>
        <dbReference type="ChEBI" id="CHEBI:57693"/>
        <dbReference type="ChEBI" id="CHEBI:58702"/>
        <dbReference type="ChEBI" id="CHEBI:85985"/>
        <dbReference type="EC" id="2.5.1.55"/>
    </reaction>
</comment>
<comment type="pathway">
    <text evidence="1">Carbohydrate biosynthesis; 3-deoxy-D-manno-octulosonate biosynthesis; 3-deoxy-D-manno-octulosonate from D-ribulose 5-phosphate: step 2/3.</text>
</comment>
<comment type="pathway">
    <text evidence="1">Bacterial outer membrane biogenesis; lipopolysaccharide biosynthesis.</text>
</comment>
<comment type="subcellular location">
    <subcellularLocation>
        <location evidence="1">Cytoplasm</location>
    </subcellularLocation>
</comment>
<comment type="similarity">
    <text evidence="1">Belongs to the KdsA family.</text>
</comment>
<sequence>MKQKVVSIGDINVANDLPFVLFGGMNVLESRDLAMRICEHYVTVTQKLGIPYVFKASFDKANRSSIHSYRGPGLEEGMKIFQELKQQFGVKVITDVHEASQAQPVSEVVDVIQLPAFLARQTDLVEAMARTGAVINVKKPQFVSPGQMGNIVEKFKEAGNDQVILCDRGSNFGYDNLVVDMLGINVMVQATGGHPVIFDVTHALQCRDPFGAASGGRRAQVAELARAGMAVGLAGLFIEAHPEPNSAKCDGPSALPLDKLEPFLVQMKAIDDLVKSFPALDTSK</sequence>
<organism>
    <name type="scientific">Yersinia pestis</name>
    <dbReference type="NCBI Taxonomy" id="632"/>
    <lineage>
        <taxon>Bacteria</taxon>
        <taxon>Pseudomonadati</taxon>
        <taxon>Pseudomonadota</taxon>
        <taxon>Gammaproteobacteria</taxon>
        <taxon>Enterobacterales</taxon>
        <taxon>Yersiniaceae</taxon>
        <taxon>Yersinia</taxon>
    </lineage>
</organism>
<accession>Q8ZEX4</accession>
<accession>Q0WFD1</accession>
<evidence type="ECO:0000255" key="1">
    <source>
        <dbReference type="HAMAP-Rule" id="MF_00056"/>
    </source>
</evidence>
<keyword id="KW-0963">Cytoplasm</keyword>
<keyword id="KW-0448">Lipopolysaccharide biosynthesis</keyword>
<keyword id="KW-1185">Reference proteome</keyword>
<keyword id="KW-0808">Transferase</keyword>
<gene>
    <name evidence="1" type="primary">kdsA</name>
    <name type="ordered locus">YPO2021</name>
    <name type="ordered locus">y2286</name>
    <name type="ordered locus">YP_1869</name>
</gene>
<name>KDSA_YERPE</name>
<protein>
    <recommendedName>
        <fullName evidence="1">2-dehydro-3-deoxyphosphooctonate aldolase</fullName>
        <ecNumber evidence="1">2.5.1.55</ecNumber>
    </recommendedName>
    <alternativeName>
        <fullName evidence="1">3-deoxy-D-manno-octulosonic acid 8-phosphate synthase</fullName>
    </alternativeName>
    <alternativeName>
        <fullName evidence="1">KDO-8-phosphate synthase</fullName>
        <shortName evidence="1">KDO 8-P synthase</shortName>
        <shortName evidence="1">KDOPS</shortName>
    </alternativeName>
    <alternativeName>
        <fullName evidence="1">Phospho-2-dehydro-3-deoxyoctonate aldolase</fullName>
    </alternativeName>
</protein>
<feature type="chain" id="PRO_0000187177" description="2-dehydro-3-deoxyphosphooctonate aldolase">
    <location>
        <begin position="1"/>
        <end position="284"/>
    </location>
</feature>
<dbReference type="EC" id="2.5.1.55" evidence="1"/>
<dbReference type="EMBL" id="AL590842">
    <property type="protein sequence ID" value="CAL20658.1"/>
    <property type="molecule type" value="Genomic_DNA"/>
</dbReference>
<dbReference type="EMBL" id="AE009952">
    <property type="protein sequence ID" value="AAM85845.1"/>
    <property type="molecule type" value="Genomic_DNA"/>
</dbReference>
<dbReference type="EMBL" id="AE017042">
    <property type="protein sequence ID" value="AAS62089.1"/>
    <property type="molecule type" value="Genomic_DNA"/>
</dbReference>
<dbReference type="PIR" id="AG0246">
    <property type="entry name" value="AG0246"/>
</dbReference>
<dbReference type="RefSeq" id="WP_002211232.1">
    <property type="nucleotide sequence ID" value="NZ_WUCM01000039.1"/>
</dbReference>
<dbReference type="RefSeq" id="YP_002347007.1">
    <property type="nucleotide sequence ID" value="NC_003143.1"/>
</dbReference>
<dbReference type="SMR" id="Q8ZEX4"/>
<dbReference type="STRING" id="214092.YPO2021"/>
<dbReference type="PaxDb" id="214092-YPO2021"/>
<dbReference type="DNASU" id="1147233"/>
<dbReference type="EnsemblBacteria" id="AAS62089">
    <property type="protein sequence ID" value="AAS62089"/>
    <property type="gene ID" value="YP_1869"/>
</dbReference>
<dbReference type="GeneID" id="96665504"/>
<dbReference type="KEGG" id="ype:YPO2021"/>
<dbReference type="KEGG" id="ypk:y2286"/>
<dbReference type="KEGG" id="ypm:YP_1869"/>
<dbReference type="PATRIC" id="fig|214092.21.peg.2406"/>
<dbReference type="eggNOG" id="COG2877">
    <property type="taxonomic scope" value="Bacteria"/>
</dbReference>
<dbReference type="HOGENOM" id="CLU_036666_0_0_6"/>
<dbReference type="OMA" id="FGYHNLV"/>
<dbReference type="OrthoDB" id="9776934at2"/>
<dbReference type="UniPathway" id="UPA00030"/>
<dbReference type="UniPathway" id="UPA00357">
    <property type="reaction ID" value="UER00474"/>
</dbReference>
<dbReference type="Proteomes" id="UP000000815">
    <property type="component" value="Chromosome"/>
</dbReference>
<dbReference type="Proteomes" id="UP000001019">
    <property type="component" value="Chromosome"/>
</dbReference>
<dbReference type="Proteomes" id="UP000002490">
    <property type="component" value="Chromosome"/>
</dbReference>
<dbReference type="GO" id="GO:0005829">
    <property type="term" value="C:cytosol"/>
    <property type="evidence" value="ECO:0000318"/>
    <property type="project" value="GO_Central"/>
</dbReference>
<dbReference type="GO" id="GO:0008676">
    <property type="term" value="F:3-deoxy-8-phosphooctulonate synthase activity"/>
    <property type="evidence" value="ECO:0000318"/>
    <property type="project" value="GO_Central"/>
</dbReference>
<dbReference type="GO" id="GO:0019294">
    <property type="term" value="P:keto-3-deoxy-D-manno-octulosonic acid biosynthetic process"/>
    <property type="evidence" value="ECO:0000318"/>
    <property type="project" value="GO_Central"/>
</dbReference>
<dbReference type="FunFam" id="3.20.20.70:FF:000058">
    <property type="entry name" value="2-dehydro-3-deoxyphosphooctonate aldolase"/>
    <property type="match status" value="1"/>
</dbReference>
<dbReference type="Gene3D" id="3.20.20.70">
    <property type="entry name" value="Aldolase class I"/>
    <property type="match status" value="1"/>
</dbReference>
<dbReference type="HAMAP" id="MF_00056">
    <property type="entry name" value="KDO8P_synth"/>
    <property type="match status" value="1"/>
</dbReference>
<dbReference type="InterPro" id="IPR013785">
    <property type="entry name" value="Aldolase_TIM"/>
</dbReference>
<dbReference type="InterPro" id="IPR006218">
    <property type="entry name" value="DAHP1/KDSA"/>
</dbReference>
<dbReference type="InterPro" id="IPR006269">
    <property type="entry name" value="KDO8P_synthase"/>
</dbReference>
<dbReference type="NCBIfam" id="TIGR01362">
    <property type="entry name" value="KDO8P_synth"/>
    <property type="match status" value="1"/>
</dbReference>
<dbReference type="NCBIfam" id="NF003543">
    <property type="entry name" value="PRK05198.1"/>
    <property type="match status" value="1"/>
</dbReference>
<dbReference type="NCBIfam" id="NF009109">
    <property type="entry name" value="PRK12457.1"/>
    <property type="match status" value="1"/>
</dbReference>
<dbReference type="PANTHER" id="PTHR21057">
    <property type="entry name" value="PHOSPHO-2-DEHYDRO-3-DEOXYHEPTONATE ALDOLASE"/>
    <property type="match status" value="1"/>
</dbReference>
<dbReference type="Pfam" id="PF00793">
    <property type="entry name" value="DAHP_synth_1"/>
    <property type="match status" value="1"/>
</dbReference>
<dbReference type="SUPFAM" id="SSF51569">
    <property type="entry name" value="Aldolase"/>
    <property type="match status" value="1"/>
</dbReference>
<proteinExistence type="inferred from homology"/>
<reference key="1">
    <citation type="journal article" date="2001" name="Nature">
        <title>Genome sequence of Yersinia pestis, the causative agent of plague.</title>
        <authorList>
            <person name="Parkhill J."/>
            <person name="Wren B.W."/>
            <person name="Thomson N.R."/>
            <person name="Titball R.W."/>
            <person name="Holden M.T.G."/>
            <person name="Prentice M.B."/>
            <person name="Sebaihia M."/>
            <person name="James K.D."/>
            <person name="Churcher C.M."/>
            <person name="Mungall K.L."/>
            <person name="Baker S."/>
            <person name="Basham D."/>
            <person name="Bentley S.D."/>
            <person name="Brooks K."/>
            <person name="Cerdeno-Tarraga A.-M."/>
            <person name="Chillingworth T."/>
            <person name="Cronin A."/>
            <person name="Davies R.M."/>
            <person name="Davis P."/>
            <person name="Dougan G."/>
            <person name="Feltwell T."/>
            <person name="Hamlin N."/>
            <person name="Holroyd S."/>
            <person name="Jagels K."/>
            <person name="Karlyshev A.V."/>
            <person name="Leather S."/>
            <person name="Moule S."/>
            <person name="Oyston P.C.F."/>
            <person name="Quail M.A."/>
            <person name="Rutherford K.M."/>
            <person name="Simmonds M."/>
            <person name="Skelton J."/>
            <person name="Stevens K."/>
            <person name="Whitehead S."/>
            <person name="Barrell B.G."/>
        </authorList>
    </citation>
    <scope>NUCLEOTIDE SEQUENCE [LARGE SCALE GENOMIC DNA]</scope>
    <source>
        <strain>CO-92 / Biovar Orientalis</strain>
    </source>
</reference>
<reference key="2">
    <citation type="journal article" date="2002" name="J. Bacteriol.">
        <title>Genome sequence of Yersinia pestis KIM.</title>
        <authorList>
            <person name="Deng W."/>
            <person name="Burland V."/>
            <person name="Plunkett G. III"/>
            <person name="Boutin A."/>
            <person name="Mayhew G.F."/>
            <person name="Liss P."/>
            <person name="Perna N.T."/>
            <person name="Rose D.J."/>
            <person name="Mau B."/>
            <person name="Zhou S."/>
            <person name="Schwartz D.C."/>
            <person name="Fetherston J.D."/>
            <person name="Lindler L.E."/>
            <person name="Brubaker R.R."/>
            <person name="Plano G.V."/>
            <person name="Straley S.C."/>
            <person name="McDonough K.A."/>
            <person name="Nilles M.L."/>
            <person name="Matson J.S."/>
            <person name="Blattner F.R."/>
            <person name="Perry R.D."/>
        </authorList>
    </citation>
    <scope>NUCLEOTIDE SEQUENCE [LARGE SCALE GENOMIC DNA]</scope>
    <source>
        <strain>KIM10+ / Biovar Mediaevalis</strain>
    </source>
</reference>
<reference key="3">
    <citation type="journal article" date="2004" name="DNA Res.">
        <title>Complete genome sequence of Yersinia pestis strain 91001, an isolate avirulent to humans.</title>
        <authorList>
            <person name="Song Y."/>
            <person name="Tong Z."/>
            <person name="Wang J."/>
            <person name="Wang L."/>
            <person name="Guo Z."/>
            <person name="Han Y."/>
            <person name="Zhang J."/>
            <person name="Pei D."/>
            <person name="Zhou D."/>
            <person name="Qin H."/>
            <person name="Pang X."/>
            <person name="Han Y."/>
            <person name="Zhai J."/>
            <person name="Li M."/>
            <person name="Cui B."/>
            <person name="Qi Z."/>
            <person name="Jin L."/>
            <person name="Dai R."/>
            <person name="Chen F."/>
            <person name="Li S."/>
            <person name="Ye C."/>
            <person name="Du Z."/>
            <person name="Lin W."/>
            <person name="Wang J."/>
            <person name="Yu J."/>
            <person name="Yang H."/>
            <person name="Wang J."/>
            <person name="Huang P."/>
            <person name="Yang R."/>
        </authorList>
    </citation>
    <scope>NUCLEOTIDE SEQUENCE [LARGE SCALE GENOMIC DNA]</scope>
    <source>
        <strain>91001 / Biovar Mediaevalis</strain>
    </source>
</reference>